<accession>Q9HIX4</accession>
<protein>
    <recommendedName>
        <fullName>Ribosome biogenesis protein Nop10</fullName>
    </recommendedName>
</protein>
<sequence length="62" mass="7238">MKSLIRKCPRCHAYTMEEKCPKCGSDTYIAVPPRYSPVDRFRKYRIEELRGEIDGENSGDQI</sequence>
<proteinExistence type="inferred from homology"/>
<name>NOP10_THEAC</name>
<reference key="1">
    <citation type="journal article" date="2000" name="Nature">
        <title>The genome sequence of the thermoacidophilic scavenger Thermoplasma acidophilum.</title>
        <authorList>
            <person name="Ruepp A."/>
            <person name="Graml W."/>
            <person name="Santos-Martinez M.-L."/>
            <person name="Koretke K.K."/>
            <person name="Volker C."/>
            <person name="Mewes H.-W."/>
            <person name="Frishman D."/>
            <person name="Stocker S."/>
            <person name="Lupas A.N."/>
            <person name="Baumeister W."/>
        </authorList>
    </citation>
    <scope>NUCLEOTIDE SEQUENCE [LARGE SCALE GENOMIC DNA]</scope>
    <source>
        <strain>ATCC 25905 / DSM 1728 / JCM 9062 / NBRC 15155 / AMRC-C165</strain>
    </source>
</reference>
<evidence type="ECO:0000250" key="1"/>
<evidence type="ECO:0000305" key="2"/>
<keyword id="KW-1185">Reference proteome</keyword>
<keyword id="KW-0687">Ribonucleoprotein</keyword>
<keyword id="KW-0690">Ribosome biogenesis</keyword>
<keyword id="KW-0698">rRNA processing</keyword>
<feature type="chain" id="PRO_0000149028" description="Ribosome biogenesis protein Nop10">
    <location>
        <begin position="1"/>
        <end position="62"/>
    </location>
</feature>
<gene>
    <name type="primary">nop10</name>
    <name type="ordered locus">Ta1202</name>
</gene>
<dbReference type="EMBL" id="AL445066">
    <property type="protein sequence ID" value="CAC12327.1"/>
    <property type="molecule type" value="Genomic_DNA"/>
</dbReference>
<dbReference type="RefSeq" id="WP_010901609.1">
    <property type="nucleotide sequence ID" value="NC_002578.1"/>
</dbReference>
<dbReference type="SMR" id="Q9HIX4"/>
<dbReference type="FunCoup" id="Q9HIX4">
    <property type="interactions" value="92"/>
</dbReference>
<dbReference type="STRING" id="273075.gene:9572425"/>
<dbReference type="PaxDb" id="273075-Ta1202"/>
<dbReference type="EnsemblBacteria" id="CAC12327">
    <property type="protein sequence ID" value="CAC12327"/>
    <property type="gene ID" value="CAC12327"/>
</dbReference>
<dbReference type="KEGG" id="tac:Ta1202"/>
<dbReference type="eggNOG" id="arCOG00906">
    <property type="taxonomic scope" value="Archaea"/>
</dbReference>
<dbReference type="HOGENOM" id="CLU_196480_1_0_2"/>
<dbReference type="InParanoid" id="Q9HIX4"/>
<dbReference type="OrthoDB" id="7259at2157"/>
<dbReference type="Proteomes" id="UP000001024">
    <property type="component" value="Chromosome"/>
</dbReference>
<dbReference type="GO" id="GO:1990904">
    <property type="term" value="C:ribonucleoprotein complex"/>
    <property type="evidence" value="ECO:0007669"/>
    <property type="project" value="UniProtKB-KW"/>
</dbReference>
<dbReference type="GO" id="GO:0030515">
    <property type="term" value="F:snoRNA binding"/>
    <property type="evidence" value="ECO:0007669"/>
    <property type="project" value="InterPro"/>
</dbReference>
<dbReference type="GO" id="GO:0001522">
    <property type="term" value="P:pseudouridine synthesis"/>
    <property type="evidence" value="ECO:0007669"/>
    <property type="project" value="InterPro"/>
</dbReference>
<dbReference type="GO" id="GO:0006364">
    <property type="term" value="P:rRNA processing"/>
    <property type="evidence" value="ECO:0007669"/>
    <property type="project" value="UniProtKB-UniRule"/>
</dbReference>
<dbReference type="Gene3D" id="2.20.28.40">
    <property type="entry name" value="H/ACA ribonucleoprotein complex, subunit Nop10"/>
    <property type="match status" value="1"/>
</dbReference>
<dbReference type="HAMAP" id="MF_00803">
    <property type="entry name" value="Nop10"/>
    <property type="match status" value="1"/>
</dbReference>
<dbReference type="InterPro" id="IPR007264">
    <property type="entry name" value="H/ACA_rnp_Nop10"/>
</dbReference>
<dbReference type="InterPro" id="IPR036756">
    <property type="entry name" value="H/ACA_rnp_Nop10_sf"/>
</dbReference>
<dbReference type="InterPro" id="IPR023532">
    <property type="entry name" value="Nop10_arc-typ"/>
</dbReference>
<dbReference type="NCBIfam" id="NF009623">
    <property type="entry name" value="PRK13130.1"/>
    <property type="match status" value="1"/>
</dbReference>
<dbReference type="Pfam" id="PF04135">
    <property type="entry name" value="Nop10p"/>
    <property type="match status" value="1"/>
</dbReference>
<dbReference type="SUPFAM" id="SSF144210">
    <property type="entry name" value="Nop10-like SnoRNP"/>
    <property type="match status" value="1"/>
</dbReference>
<organism>
    <name type="scientific">Thermoplasma acidophilum (strain ATCC 25905 / DSM 1728 / JCM 9062 / NBRC 15155 / AMRC-C165)</name>
    <dbReference type="NCBI Taxonomy" id="273075"/>
    <lineage>
        <taxon>Archaea</taxon>
        <taxon>Methanobacteriati</taxon>
        <taxon>Thermoplasmatota</taxon>
        <taxon>Thermoplasmata</taxon>
        <taxon>Thermoplasmatales</taxon>
        <taxon>Thermoplasmataceae</taxon>
        <taxon>Thermoplasma</taxon>
    </lineage>
</organism>
<comment type="function">
    <text evidence="1">Involved in ribosome biogenesis; more specifically in 18S rRNA pseudouridylation and in cleavage of pre-rRNA.</text>
</comment>
<comment type="similarity">
    <text evidence="2">Belongs to the NOP10 family.</text>
</comment>